<name>3XYN2_VIBSX</name>
<keyword id="KW-0119">Carbohydrate metabolism</keyword>
<keyword id="KW-0136">Cellulose degradation</keyword>
<keyword id="KW-0903">Direct protein sequencing</keyword>
<keyword id="KW-1015">Disulfide bond</keyword>
<keyword id="KW-0326">Glycosidase</keyword>
<keyword id="KW-0378">Hydrolase</keyword>
<keyword id="KW-0624">Polysaccharide degradation</keyword>
<keyword id="KW-0732">Signal</keyword>
<keyword id="KW-0858">Xylan degradation</keyword>
<evidence type="ECO:0000250" key="1"/>
<evidence type="ECO:0000250" key="2">
    <source>
        <dbReference type="UniProtKB" id="Q8RS40"/>
    </source>
</evidence>
<evidence type="ECO:0000255" key="3">
    <source>
        <dbReference type="PROSITE-ProRule" id="PRU01100"/>
    </source>
</evidence>
<evidence type="ECO:0000256" key="4">
    <source>
        <dbReference type="SAM" id="MobiDB-lite"/>
    </source>
</evidence>
<evidence type="ECO:0000269" key="5">
    <source>
    </source>
</evidence>
<evidence type="ECO:0000269" key="6">
    <source>
    </source>
</evidence>
<evidence type="ECO:0000305" key="7"/>
<evidence type="ECO:0000312" key="8">
    <source>
        <dbReference type="EMBL" id="BAA94698.1"/>
    </source>
</evidence>
<comment type="function">
    <text evidence="5 6">Catalyzes the hydrolysis of beta-1,3-xylan into oligosaccharides, mainly xylotriose and xylobiose with smaller amounts of xylotetraose, xylose, xylopentaose and xylohexaose. Weakly active toward beta-1,3-xylotriose, yielding xylose and xylobiose. Converts beta-1,3-xylotetraose into xylotriose, xylobiose and xylose. Converts beta-1,3-xylopentaose into xylotetraose, xylotriose, xylobiose and xylose. Does not hydrolyze xylobiose, p-nitrophenyl-beta-xyloside, beta-1,4-xylan, curdlan or carboxymethylcellulose.</text>
</comment>
<comment type="catalytic activity">
    <reaction evidence="5 6">
        <text>Random hydrolysis of (1-&gt;3)-beta-D-glycosidic linkages in (1-&gt;3)-beta-D-xylans.</text>
        <dbReference type="EC" id="3.2.1.32"/>
    </reaction>
</comment>
<comment type="activity regulation">
    <text evidence="5">Completely inhibited by Cu(2+), Hg(2+) and N-bromosuccinimide. Strongly inhibited by Ag(+), Zn(2+) and Pb(2+). Moderately inhibited by Fe(3+), Al(3+), Mn(2+), dithiothreitol and p-chloromercuribenzoic acid. Slightly activated by Mg(2+) and Ca(2+). Unaffected by Na(+), K(+), Ba(2+), EDTA, iodoacetic acid and N-ethylmalaimide.</text>
</comment>
<comment type="biophysicochemical properties">
    <phDependence>
        <text evidence="5">Optimum pH is 7.0. Stable between pH 5.0 and 8.0.</text>
    </phDependence>
    <temperatureDependence>
        <text evidence="5">Optimum temperature is 37 degrees Celsius. Stable below 30 degrees Celsius.</text>
    </temperatureDependence>
</comment>
<comment type="induction">
    <text evidence="5">By beta-1,3-xylan.</text>
</comment>
<comment type="domain">
    <text evidence="1">The carbohydrate binding module (CBM) binds to insoluble beta-1,3-xylan, but not to insoluble beta-1,4-xylan, beta-1,4-glucan, beta-1,4-mannan, curdlan, chitin, or soluble polysaccharides.</text>
</comment>
<comment type="similarity">
    <text evidence="3">Belongs to the glycosyl hydrolase 26 family.</text>
</comment>
<reference evidence="7 8" key="1">
    <citation type="journal article" date="2000" name="Appl. Environ. Microbiol.">
        <title>Cloning, sequencing, and expression in Escherichia coli of the new gene encoding beta-1,3-xylanase from a marine bacterium, Vibrio sp. strain XY-214.</title>
        <authorList>
            <person name="Araki T."/>
            <person name="Hashikawa S."/>
            <person name="Morishita T."/>
        </authorList>
    </citation>
    <scope>NUCLEOTIDE SEQUENCE [GENOMIC DNA]</scope>
    <scope>PROTEIN SEQUENCE OF 23-41 AND 300-313</scope>
    <scope>FUNCTION</scope>
    <scope>CATALYTIC ACTIVITY</scope>
    <source>
        <strain evidence="8">XY-214</strain>
    </source>
</reference>
<reference evidence="7" key="2">
    <citation type="journal article" date="1999" name="Biosci. Biotechnol. Biochem.">
        <title>Purification and characterization of beta-1,3-xylanase from a marine bacterium, Vibrio sp. XY-214.</title>
        <authorList>
            <person name="Araki T."/>
            <person name="Tani S."/>
            <person name="Maeda K."/>
            <person name="Hashikawa S."/>
            <person name="Nakagawa H."/>
            <person name="Morishita T."/>
        </authorList>
    </citation>
    <scope>PROTEIN SEQUENCE OF 23-38</scope>
    <scope>FUNCTION</scope>
    <scope>CATALYTIC ACTIVITY</scope>
    <scope>ACTIVITY REGULATION</scope>
    <scope>BIOPHYSICOCHEMICAL PROPERTIES</scope>
    <scope>INDUCTION</scope>
    <source>
        <strain evidence="5">XY-214</strain>
    </source>
</reference>
<proteinExistence type="evidence at protein level"/>
<organism>
    <name type="scientific">Vibrio sp</name>
    <dbReference type="NCBI Taxonomy" id="678"/>
    <lineage>
        <taxon>Bacteria</taxon>
        <taxon>Pseudomonadati</taxon>
        <taxon>Pseudomonadota</taxon>
        <taxon>Gammaproteobacteria</taxon>
        <taxon>Vibrionales</taxon>
        <taxon>Vibrionaceae</taxon>
        <taxon>Vibrio</taxon>
    </lineage>
</organism>
<gene>
    <name evidence="8" type="primary">txyA</name>
</gene>
<dbReference type="EC" id="3.2.1.32"/>
<dbReference type="EMBL" id="AB029043">
    <property type="protein sequence ID" value="BAA94698.1"/>
    <property type="molecule type" value="Genomic_DNA"/>
</dbReference>
<dbReference type="SMR" id="Q9LCB9"/>
<dbReference type="CAZy" id="CBM31">
    <property type="family name" value="Carbohydrate-Binding Module Family 31"/>
</dbReference>
<dbReference type="CAZy" id="GH26">
    <property type="family name" value="Glycoside Hydrolase Family 26"/>
</dbReference>
<dbReference type="KEGG" id="ag:BAA94698"/>
<dbReference type="BioCyc" id="MetaCyc:MONOMER-16528"/>
<dbReference type="BRENDA" id="3.2.1.32">
    <property type="organism ID" value="6640"/>
</dbReference>
<dbReference type="GO" id="GO:0016985">
    <property type="term" value="F:mannan endo-1,4-beta-mannosidase activity"/>
    <property type="evidence" value="ECO:0007669"/>
    <property type="project" value="InterPro"/>
</dbReference>
<dbReference type="GO" id="GO:0030247">
    <property type="term" value="F:polysaccharide binding"/>
    <property type="evidence" value="ECO:0000250"/>
    <property type="project" value="UniProtKB"/>
</dbReference>
<dbReference type="GO" id="GO:0033914">
    <property type="term" value="F:xylan 1,3-beta-xylosidase activity"/>
    <property type="evidence" value="ECO:0000314"/>
    <property type="project" value="UniProtKB"/>
</dbReference>
<dbReference type="GO" id="GO:0033905">
    <property type="term" value="F:xylan endo-1,3-beta-xylosidase activity"/>
    <property type="evidence" value="ECO:0007669"/>
    <property type="project" value="UniProtKB-EC"/>
</dbReference>
<dbReference type="GO" id="GO:0030245">
    <property type="term" value="P:cellulose catabolic process"/>
    <property type="evidence" value="ECO:0007669"/>
    <property type="project" value="UniProtKB-KW"/>
</dbReference>
<dbReference type="GO" id="GO:0006080">
    <property type="term" value="P:substituted mannan metabolic process"/>
    <property type="evidence" value="ECO:0007669"/>
    <property type="project" value="InterPro"/>
</dbReference>
<dbReference type="GO" id="GO:0045493">
    <property type="term" value="P:xylan catabolic process"/>
    <property type="evidence" value="ECO:0000314"/>
    <property type="project" value="UniProtKB"/>
</dbReference>
<dbReference type="FunFam" id="2.60.40.2450:FF:000001">
    <property type="entry name" value="Beta-1,3-xylanase"/>
    <property type="match status" value="1"/>
</dbReference>
<dbReference type="FunFam" id="3.20.20.80:FF:000335">
    <property type="entry name" value="Beta-1,3-xylanase TXYA"/>
    <property type="match status" value="1"/>
</dbReference>
<dbReference type="Gene3D" id="2.60.40.2450">
    <property type="entry name" value="Beta-1,3-xylanase, CBM31 domain"/>
    <property type="match status" value="1"/>
</dbReference>
<dbReference type="Gene3D" id="3.20.20.80">
    <property type="entry name" value="Glycosidases"/>
    <property type="match status" value="1"/>
</dbReference>
<dbReference type="InterPro" id="IPR021016">
    <property type="entry name" value="Beta-xylanase"/>
</dbReference>
<dbReference type="InterPro" id="IPR038560">
    <property type="entry name" value="Beta-xylanase_CBM31_sf"/>
</dbReference>
<dbReference type="InterPro" id="IPR022790">
    <property type="entry name" value="GH26_dom"/>
</dbReference>
<dbReference type="InterPro" id="IPR000805">
    <property type="entry name" value="Glyco_hydro_26"/>
</dbReference>
<dbReference type="InterPro" id="IPR017853">
    <property type="entry name" value="Glycoside_hydrolase_SF"/>
</dbReference>
<dbReference type="PANTHER" id="PTHR40079:SF4">
    <property type="entry name" value="GH26 DOMAIN-CONTAINING PROTEIN-RELATED"/>
    <property type="match status" value="1"/>
</dbReference>
<dbReference type="PANTHER" id="PTHR40079">
    <property type="entry name" value="MANNAN ENDO-1,4-BETA-MANNOSIDASE E-RELATED"/>
    <property type="match status" value="1"/>
</dbReference>
<dbReference type="Pfam" id="PF11606">
    <property type="entry name" value="AlcCBM31"/>
    <property type="match status" value="1"/>
</dbReference>
<dbReference type="SUPFAM" id="SSF51445">
    <property type="entry name" value="(Trans)glycosidases"/>
    <property type="match status" value="1"/>
</dbReference>
<dbReference type="PROSITE" id="PS51764">
    <property type="entry name" value="GH26"/>
    <property type="match status" value="1"/>
</dbReference>
<protein>
    <recommendedName>
        <fullName>Beta-1,3-xylanase TXYA</fullName>
        <ecNumber>3.2.1.32</ecNumber>
    </recommendedName>
    <alternativeName>
        <fullName evidence="8">Endo-1,3-beta-xylanase</fullName>
    </alternativeName>
</protein>
<accession>Q9LCB9</accession>
<feature type="signal peptide" evidence="5 6">
    <location>
        <begin position="1"/>
        <end position="22"/>
    </location>
</feature>
<feature type="chain" id="PRO_0000403221" description="Beta-1,3-xylanase TXYA" evidence="5 6">
    <location>
        <begin position="23"/>
        <end position="460"/>
    </location>
</feature>
<feature type="domain" description="GH26" evidence="3">
    <location>
        <begin position="23"/>
        <end position="337"/>
    </location>
</feature>
<feature type="region of interest" description="Disordered" evidence="4">
    <location>
        <begin position="347"/>
        <end position="371"/>
    </location>
</feature>
<feature type="region of interest" description="Carbohydrate binding module (CBM)">
    <location>
        <begin position="368"/>
        <end position="460"/>
    </location>
</feature>
<feature type="compositionally biased region" description="Gly residues" evidence="4">
    <location>
        <begin position="348"/>
        <end position="366"/>
    </location>
</feature>
<feature type="active site" description="Proton donor" evidence="3">
    <location>
        <position position="138"/>
    </location>
</feature>
<feature type="active site" description="Nucleophile" evidence="3">
    <location>
        <position position="234"/>
    </location>
</feature>
<feature type="disulfide bond" evidence="2">
    <location>
        <begin position="373"/>
        <end position="459"/>
    </location>
</feature>
<feature type="disulfide bond" evidence="2">
    <location>
        <begin position="404"/>
        <end position="409"/>
    </location>
</feature>
<sequence>MKKLAKMISVATLGACAFQAHALDGKLVPDQGILVSVGQDVDSVNDYSSAMGTTPAGVTNYVGIVNLDGLSTDADAGAGRNNIVELANQYPTSALIVGVSMNGEVQNVANGQYNANIDTLIRTLGEFDRPVYLRWAYEVDGPWNGHNTEDLKQSFRHVYQRIRELGYADNISMVWQVASYCPTAPGQLGTWWPGDDVVDWVGLSYFAPQDCNWDRVNEAAQWARSHNKPLFINESSPQRYQLADLTYSTDPAKGTNRQAKTDQQIWSEWFEPFFQFMVDNQDILKGFTYINADWDSQWRWAAPYNEGYWGDSRVQVIPYIKQKWQETLSDPKFIRHSDELFAQLGYGNSDGGNGGDNGGDNGGDNGGETPENCTDDFNFNYVSDNEIEVYHVDKGWSAGWNYLCLDDYCLSGTKSNGAFSRSFSAQLGQTYKMTFKVEDITGQGQQIIDKTVTFTNQVCN</sequence>